<organism>
    <name type="scientific">Macaca fascicularis</name>
    <name type="common">Crab-eating macaque</name>
    <name type="synonym">Cynomolgus monkey</name>
    <dbReference type="NCBI Taxonomy" id="9541"/>
    <lineage>
        <taxon>Eukaryota</taxon>
        <taxon>Metazoa</taxon>
        <taxon>Chordata</taxon>
        <taxon>Craniata</taxon>
        <taxon>Vertebrata</taxon>
        <taxon>Euteleostomi</taxon>
        <taxon>Mammalia</taxon>
        <taxon>Eutheria</taxon>
        <taxon>Euarchontoglires</taxon>
        <taxon>Primates</taxon>
        <taxon>Haplorrhini</taxon>
        <taxon>Catarrhini</taxon>
        <taxon>Cercopithecidae</taxon>
        <taxon>Cercopithecinae</taxon>
        <taxon>Macaca</taxon>
    </lineage>
</organism>
<dbReference type="EMBL" id="DQ367071">
    <property type="protein sequence ID" value="ABE73773.1"/>
    <property type="molecule type" value="Genomic_DNA"/>
</dbReference>
<dbReference type="EMBL" id="DQ367072">
    <property type="protein sequence ID" value="ABE73774.1"/>
    <property type="molecule type" value="Genomic_DNA"/>
</dbReference>
<dbReference type="RefSeq" id="XP_005547943.3">
    <property type="nucleotide sequence ID" value="XM_005547886.4"/>
</dbReference>
<dbReference type="SMR" id="Q1KYK9"/>
<dbReference type="STRING" id="9541.ENSMFAP00000026774"/>
<dbReference type="GlyCosmos" id="Q1KYK9">
    <property type="glycosylation" value="3 sites, No reported glycans"/>
</dbReference>
<dbReference type="Ensembl" id="ENSMFAT00000000956.2">
    <property type="protein sequence ID" value="ENSMFAP00000026774.1"/>
    <property type="gene ID" value="ENSMFAG00000044809.2"/>
</dbReference>
<dbReference type="GeneID" id="102137321"/>
<dbReference type="KEGG" id="mcf:102137321"/>
<dbReference type="CTD" id="7476"/>
<dbReference type="VEuPathDB" id="HostDB:ENSMFAG00000044809"/>
<dbReference type="eggNOG" id="KOG3913">
    <property type="taxonomic scope" value="Eukaryota"/>
</dbReference>
<dbReference type="GeneTree" id="ENSGT00940000158523"/>
<dbReference type="OMA" id="QGYNDQE"/>
<dbReference type="OrthoDB" id="5945655at2759"/>
<dbReference type="Proteomes" id="UP000233100">
    <property type="component" value="Chromosome 2"/>
</dbReference>
<dbReference type="Bgee" id="ENSMFAG00000044809">
    <property type="expression patterns" value="Expressed in frontal cortex and 2 other cell types or tissues"/>
</dbReference>
<dbReference type="GO" id="GO:0009986">
    <property type="term" value="C:cell surface"/>
    <property type="evidence" value="ECO:0007669"/>
    <property type="project" value="Ensembl"/>
</dbReference>
<dbReference type="GO" id="GO:0031012">
    <property type="term" value="C:extracellular matrix"/>
    <property type="evidence" value="ECO:0007669"/>
    <property type="project" value="Ensembl"/>
</dbReference>
<dbReference type="GO" id="GO:0005615">
    <property type="term" value="C:extracellular space"/>
    <property type="evidence" value="ECO:0007669"/>
    <property type="project" value="TreeGrafter"/>
</dbReference>
<dbReference type="GO" id="GO:0098978">
    <property type="term" value="C:glutamatergic synapse"/>
    <property type="evidence" value="ECO:0007669"/>
    <property type="project" value="Ensembl"/>
</dbReference>
<dbReference type="GO" id="GO:0098793">
    <property type="term" value="C:presynapse"/>
    <property type="evidence" value="ECO:0007669"/>
    <property type="project" value="GOC"/>
</dbReference>
<dbReference type="GO" id="GO:0098685">
    <property type="term" value="C:Schaffer collateral - CA1 synapse"/>
    <property type="evidence" value="ECO:0007669"/>
    <property type="project" value="Ensembl"/>
</dbReference>
<dbReference type="GO" id="GO:0005125">
    <property type="term" value="F:cytokine activity"/>
    <property type="evidence" value="ECO:0007669"/>
    <property type="project" value="Ensembl"/>
</dbReference>
<dbReference type="GO" id="GO:0005109">
    <property type="term" value="F:frizzled binding"/>
    <property type="evidence" value="ECO:0007669"/>
    <property type="project" value="Ensembl"/>
</dbReference>
<dbReference type="GO" id="GO:0001525">
    <property type="term" value="P:angiogenesis"/>
    <property type="evidence" value="ECO:0007669"/>
    <property type="project" value="Ensembl"/>
</dbReference>
<dbReference type="GO" id="GO:0006915">
    <property type="term" value="P:apoptotic process"/>
    <property type="evidence" value="ECO:0007669"/>
    <property type="project" value="Ensembl"/>
</dbReference>
<dbReference type="GO" id="GO:0045167">
    <property type="term" value="P:asymmetric protein localization involved in cell fate determination"/>
    <property type="evidence" value="ECO:0007669"/>
    <property type="project" value="Ensembl"/>
</dbReference>
<dbReference type="GO" id="GO:0060070">
    <property type="term" value="P:canonical Wnt signaling pathway"/>
    <property type="evidence" value="ECO:0007669"/>
    <property type="project" value="Ensembl"/>
</dbReference>
<dbReference type="GO" id="GO:0001502">
    <property type="term" value="P:cartilage condensation"/>
    <property type="evidence" value="ECO:0007669"/>
    <property type="project" value="Ensembl"/>
</dbReference>
<dbReference type="GO" id="GO:0021846">
    <property type="term" value="P:cell proliferation in forebrain"/>
    <property type="evidence" value="ECO:0007669"/>
    <property type="project" value="Ensembl"/>
</dbReference>
<dbReference type="GO" id="GO:0071560">
    <property type="term" value="P:cellular response to transforming growth factor beta stimulus"/>
    <property type="evidence" value="ECO:0007669"/>
    <property type="project" value="Ensembl"/>
</dbReference>
<dbReference type="GO" id="GO:0022009">
    <property type="term" value="P:central nervous system vasculogenesis"/>
    <property type="evidence" value="ECO:0007669"/>
    <property type="project" value="Ensembl"/>
</dbReference>
<dbReference type="GO" id="GO:0021707">
    <property type="term" value="P:cerebellar granule cell differentiation"/>
    <property type="evidence" value="ECO:0007669"/>
    <property type="project" value="Ensembl"/>
</dbReference>
<dbReference type="GO" id="GO:0002062">
    <property type="term" value="P:chondrocyte differentiation"/>
    <property type="evidence" value="ECO:0007669"/>
    <property type="project" value="Ensembl"/>
</dbReference>
<dbReference type="GO" id="GO:0060997">
    <property type="term" value="P:dendritic spine morphogenesis"/>
    <property type="evidence" value="ECO:0007669"/>
    <property type="project" value="Ensembl"/>
</dbReference>
<dbReference type="GO" id="GO:0009953">
    <property type="term" value="P:dorsal/ventral pattern formation"/>
    <property type="evidence" value="ECO:0007669"/>
    <property type="project" value="Ensembl"/>
</dbReference>
<dbReference type="GO" id="GO:0000578">
    <property type="term" value="P:embryonic axis specification"/>
    <property type="evidence" value="ECO:0007669"/>
    <property type="project" value="Ensembl"/>
</dbReference>
<dbReference type="GO" id="GO:0042733">
    <property type="term" value="P:embryonic digit morphogenesis"/>
    <property type="evidence" value="ECO:0007669"/>
    <property type="project" value="Ensembl"/>
</dbReference>
<dbReference type="GO" id="GO:0035115">
    <property type="term" value="P:embryonic forelimb morphogenesis"/>
    <property type="evidence" value="ECO:0007669"/>
    <property type="project" value="Ensembl"/>
</dbReference>
<dbReference type="GO" id="GO:0035116">
    <property type="term" value="P:embryonic hindlimb morphogenesis"/>
    <property type="evidence" value="ECO:0007669"/>
    <property type="project" value="Ensembl"/>
</dbReference>
<dbReference type="GO" id="GO:0060856">
    <property type="term" value="P:establishment of blood-brain barrier"/>
    <property type="evidence" value="ECO:0007669"/>
    <property type="project" value="Ensembl"/>
</dbReference>
<dbReference type="GO" id="GO:0030010">
    <property type="term" value="P:establishment of cell polarity"/>
    <property type="evidence" value="ECO:0007669"/>
    <property type="project" value="Ensembl"/>
</dbReference>
<dbReference type="GO" id="GO:0043066">
    <property type="term" value="P:negative regulation of apoptotic process"/>
    <property type="evidence" value="ECO:0007669"/>
    <property type="project" value="Ensembl"/>
</dbReference>
<dbReference type="GO" id="GO:0050768">
    <property type="term" value="P:negative regulation of neurogenesis"/>
    <property type="evidence" value="ECO:0007669"/>
    <property type="project" value="Ensembl"/>
</dbReference>
<dbReference type="GO" id="GO:0007269">
    <property type="term" value="P:neurotransmitter secretion"/>
    <property type="evidence" value="ECO:0007669"/>
    <property type="project" value="Ensembl"/>
</dbReference>
<dbReference type="GO" id="GO:0060066">
    <property type="term" value="P:oviduct development"/>
    <property type="evidence" value="ECO:0007669"/>
    <property type="project" value="Ensembl"/>
</dbReference>
<dbReference type="GO" id="GO:0010595">
    <property type="term" value="P:positive regulation of endothelial cell migration"/>
    <property type="evidence" value="ECO:0007669"/>
    <property type="project" value="Ensembl"/>
</dbReference>
<dbReference type="GO" id="GO:0060054">
    <property type="term" value="P:positive regulation of epithelial cell proliferation involved in wound healing"/>
    <property type="evidence" value="ECO:0007669"/>
    <property type="project" value="Ensembl"/>
</dbReference>
<dbReference type="GO" id="GO:2000463">
    <property type="term" value="P:positive regulation of excitatory postsynaptic potential"/>
    <property type="evidence" value="ECO:0007669"/>
    <property type="project" value="Ensembl"/>
</dbReference>
<dbReference type="GO" id="GO:1904891">
    <property type="term" value="P:positive regulation of excitatory synapse assembly"/>
    <property type="evidence" value="ECO:0007669"/>
    <property type="project" value="Ensembl"/>
</dbReference>
<dbReference type="GO" id="GO:0010628">
    <property type="term" value="P:positive regulation of gene expression"/>
    <property type="evidence" value="ECO:0007669"/>
    <property type="project" value="Ensembl"/>
</dbReference>
<dbReference type="GO" id="GO:0046330">
    <property type="term" value="P:positive regulation of JNK cascade"/>
    <property type="evidence" value="ECO:0007669"/>
    <property type="project" value="TreeGrafter"/>
</dbReference>
<dbReference type="GO" id="GO:0051247">
    <property type="term" value="P:positive regulation of protein metabolic process"/>
    <property type="evidence" value="ECO:0007669"/>
    <property type="project" value="Ensembl"/>
</dbReference>
<dbReference type="GO" id="GO:0045944">
    <property type="term" value="P:positive regulation of transcription by RNA polymerase II"/>
    <property type="evidence" value="ECO:0007669"/>
    <property type="project" value="Ensembl"/>
</dbReference>
<dbReference type="GO" id="GO:0031133">
    <property type="term" value="P:regulation of axon diameter"/>
    <property type="evidence" value="ECO:0007669"/>
    <property type="project" value="Ensembl"/>
</dbReference>
<dbReference type="GO" id="GO:0099175">
    <property type="term" value="P:regulation of postsynapse organization"/>
    <property type="evidence" value="ECO:0007669"/>
    <property type="project" value="Ensembl"/>
</dbReference>
<dbReference type="GO" id="GO:1905606">
    <property type="term" value="P:regulation of presynapse assembly"/>
    <property type="evidence" value="ECO:0007669"/>
    <property type="project" value="Ensembl"/>
</dbReference>
<dbReference type="GO" id="GO:2000300">
    <property type="term" value="P:regulation of synaptic vesicle exocytosis"/>
    <property type="evidence" value="ECO:0007669"/>
    <property type="project" value="Ensembl"/>
</dbReference>
<dbReference type="GO" id="GO:0043627">
    <property type="term" value="P:response to estrogen"/>
    <property type="evidence" value="ECO:0007669"/>
    <property type="project" value="Ensembl"/>
</dbReference>
<dbReference type="GO" id="GO:0062009">
    <property type="term" value="P:secondary palate development"/>
    <property type="evidence" value="ECO:0007669"/>
    <property type="project" value="Ensembl"/>
</dbReference>
<dbReference type="GO" id="GO:0014719">
    <property type="term" value="P:skeletal muscle satellite cell activation"/>
    <property type="evidence" value="ECO:0007669"/>
    <property type="project" value="Ensembl"/>
</dbReference>
<dbReference type="GO" id="GO:0014834">
    <property type="term" value="P:skeletal muscle satellite cell maintenance involved in skeletal muscle regeneration"/>
    <property type="evidence" value="ECO:0007669"/>
    <property type="project" value="Ensembl"/>
</dbReference>
<dbReference type="GO" id="GO:0048103">
    <property type="term" value="P:somatic stem cell division"/>
    <property type="evidence" value="ECO:0007669"/>
    <property type="project" value="Ensembl"/>
</dbReference>
<dbReference type="GO" id="GO:0035019">
    <property type="term" value="P:somatic stem cell population maintenance"/>
    <property type="evidence" value="ECO:0007669"/>
    <property type="project" value="Ensembl"/>
</dbReference>
<dbReference type="GO" id="GO:0048864">
    <property type="term" value="P:stem cell development"/>
    <property type="evidence" value="ECO:0007669"/>
    <property type="project" value="Ensembl"/>
</dbReference>
<dbReference type="GO" id="GO:0007416">
    <property type="term" value="P:synapse assembly"/>
    <property type="evidence" value="ECO:0007669"/>
    <property type="project" value="Ensembl"/>
</dbReference>
<dbReference type="GO" id="GO:0061038">
    <property type="term" value="P:uterus morphogenesis"/>
    <property type="evidence" value="ECO:0007669"/>
    <property type="project" value="Ensembl"/>
</dbReference>
<dbReference type="GO" id="GO:0060071">
    <property type="term" value="P:Wnt signaling pathway, planar cell polarity pathway"/>
    <property type="evidence" value="ECO:0007669"/>
    <property type="project" value="Ensembl"/>
</dbReference>
<dbReference type="GO" id="GO:0035313">
    <property type="term" value="P:wound healing, spreading of epidermal cells"/>
    <property type="evidence" value="ECO:0007669"/>
    <property type="project" value="Ensembl"/>
</dbReference>
<dbReference type="CDD" id="cd19349">
    <property type="entry name" value="Wnt_Wnt7a"/>
    <property type="match status" value="1"/>
</dbReference>
<dbReference type="FunFam" id="3.30.2460.20:FF:000001">
    <property type="entry name" value="Wnt homolog"/>
    <property type="match status" value="1"/>
</dbReference>
<dbReference type="Gene3D" id="3.30.2460.20">
    <property type="match status" value="1"/>
</dbReference>
<dbReference type="InterPro" id="IPR005817">
    <property type="entry name" value="Wnt"/>
</dbReference>
<dbReference type="InterPro" id="IPR013300">
    <property type="entry name" value="Wnt7"/>
</dbReference>
<dbReference type="InterPro" id="IPR043158">
    <property type="entry name" value="Wnt_C"/>
</dbReference>
<dbReference type="InterPro" id="IPR018161">
    <property type="entry name" value="Wnt_CS"/>
</dbReference>
<dbReference type="PANTHER" id="PTHR12027:SF78">
    <property type="entry name" value="PROTEIN WNT-7A"/>
    <property type="match status" value="1"/>
</dbReference>
<dbReference type="PANTHER" id="PTHR12027">
    <property type="entry name" value="WNT RELATED"/>
    <property type="match status" value="1"/>
</dbReference>
<dbReference type="Pfam" id="PF00110">
    <property type="entry name" value="wnt"/>
    <property type="match status" value="1"/>
</dbReference>
<dbReference type="PRINTS" id="PR01891">
    <property type="entry name" value="WNT7PROTEIN"/>
</dbReference>
<dbReference type="PRINTS" id="PR01349">
    <property type="entry name" value="WNTPROTEIN"/>
</dbReference>
<dbReference type="SMART" id="SM00097">
    <property type="entry name" value="WNT1"/>
    <property type="match status" value="1"/>
</dbReference>
<dbReference type="PROSITE" id="PS00246">
    <property type="entry name" value="WNT1"/>
    <property type="match status" value="1"/>
</dbReference>
<keyword id="KW-0217">Developmental protein</keyword>
<keyword id="KW-1015">Disulfide bond</keyword>
<keyword id="KW-0272">Extracellular matrix</keyword>
<keyword id="KW-0325">Glycoprotein</keyword>
<keyword id="KW-0449">Lipoprotein</keyword>
<keyword id="KW-1185">Reference proteome</keyword>
<keyword id="KW-0964">Secreted</keyword>
<keyword id="KW-0732">Signal</keyword>
<keyword id="KW-0879">Wnt signaling pathway</keyword>
<proteinExistence type="inferred from homology"/>
<feature type="signal peptide" evidence="6">
    <location>
        <begin position="1"/>
        <end position="31"/>
    </location>
</feature>
<feature type="chain" id="PRO_0000245336" description="Protein Wnt-7a">
    <location>
        <begin position="32"/>
        <end position="349"/>
    </location>
</feature>
<feature type="region of interest" description="Disordered linker" evidence="1">
    <location>
        <begin position="238"/>
        <end position="266"/>
    </location>
</feature>
<feature type="lipid moiety-binding region" description="O-palmitoleoyl serine; by PORCN" evidence="5">
    <location>
        <position position="206"/>
    </location>
</feature>
<feature type="glycosylation site" description="N-linked (GlcNAc...) asparagine" evidence="6">
    <location>
        <position position="83"/>
    </location>
</feature>
<feature type="glycosylation site" description="N-linked (GlcNAc...) asparagine" evidence="6">
    <location>
        <position position="127"/>
    </location>
</feature>
<feature type="glycosylation site" description="N-linked (GlcNAc...) asparagine" evidence="6">
    <location>
        <position position="295"/>
    </location>
</feature>
<feature type="disulfide bond" evidence="4">
    <location>
        <begin position="73"/>
        <end position="84"/>
    </location>
</feature>
<feature type="disulfide bond" evidence="4">
    <location>
        <begin position="123"/>
        <end position="131"/>
    </location>
</feature>
<feature type="disulfide bond" evidence="4">
    <location>
        <begin position="133"/>
        <end position="152"/>
    </location>
</feature>
<feature type="disulfide bond" evidence="4">
    <location>
        <begin position="200"/>
        <end position="214"/>
    </location>
</feature>
<feature type="disulfide bond" evidence="4">
    <location>
        <begin position="202"/>
        <end position="209"/>
    </location>
</feature>
<feature type="disulfide bond" evidence="4">
    <location>
        <begin position="278"/>
        <end position="309"/>
    </location>
</feature>
<feature type="disulfide bond" evidence="4">
    <location>
        <begin position="294"/>
        <end position="304"/>
    </location>
</feature>
<feature type="disulfide bond" evidence="4">
    <location>
        <begin position="308"/>
        <end position="348"/>
    </location>
</feature>
<feature type="disulfide bond" evidence="4">
    <location>
        <begin position="324"/>
        <end position="339"/>
    </location>
</feature>
<feature type="disulfide bond" evidence="4">
    <location>
        <begin position="326"/>
        <end position="336"/>
    </location>
</feature>
<feature type="disulfide bond" evidence="4">
    <location>
        <begin position="331"/>
        <end position="332"/>
    </location>
</feature>
<protein>
    <recommendedName>
        <fullName>Protein Wnt-7a</fullName>
    </recommendedName>
</protein>
<sequence length="349" mass="39019">MNRKARRCLGHLFLSLGMVYLRIGGFSTVVALGASIICNKIPGLAPRQRAICQSRPDAIIVIGEGSQMGLDECQFQFRNGRWNCSALGERTVFGKELKVGSREAAFTYAIIAAGVAHAITAACTQGNLSDCGCDKEKQGQYHRDEGWKWGGCSADIRYGIGFAKVFVDAREIKQNARTLMNLHNNEAGRKILEENMKLECKCHGVSGSCTTKTCWTTLPQFRELGYVLKDKYNEAVHVEPVRASRNKRPTFLKIKKPLSYRKPMDTDLVYIEKSPNYCEEDPVTGSVGTQGRACNKTAPQASGCDLMCCGRGYNTHQYARVWQCNCKFHWCCYVKCNTCSERTEMYTCK</sequence>
<name>WNT7A_MACFA</name>
<gene>
    <name type="primary">WNT7A</name>
</gene>
<evidence type="ECO:0000250" key="1">
    <source>
        <dbReference type="UniProtKB" id="O00755"/>
    </source>
</evidence>
<evidence type="ECO:0000250" key="2">
    <source>
        <dbReference type="UniProtKB" id="P24383"/>
    </source>
</evidence>
<evidence type="ECO:0000250" key="3">
    <source>
        <dbReference type="UniProtKB" id="P27467"/>
    </source>
</evidence>
<evidence type="ECO:0000250" key="4">
    <source>
        <dbReference type="UniProtKB" id="P28026"/>
    </source>
</evidence>
<evidence type="ECO:0000250" key="5">
    <source>
        <dbReference type="UniProtKB" id="P56704"/>
    </source>
</evidence>
<evidence type="ECO:0000255" key="6"/>
<evidence type="ECO:0000305" key="7"/>
<accession>Q1KYK9</accession>
<comment type="function">
    <text evidence="1 2">Ligand for members of the frizzled family of seven transmembrane receptors that functions in the canonical Wnt/beta-catenin signaling pathway (By similarity). Plays an important role in embryonic development, including dorsal versus ventral patterning during limb development, skeleton development and urogenital tract development. Required for central nervous system (CNS) angiogenesis and blood-brain barrier regulation (By similarity). Required for normal, sexually dimorphic development of the Mullerian ducts, and for normal fertility in both sexes. Required for normal neural stem cell proliferation in the hippocampus dentate gyrus. Required for normal progress through the cell cycle in neural progenitor cells, for self-renewal of neural stem cells, and for normal neuronal differentiation and maturation. Promotes formation of synapses via its interaction with FZD5 (By similarity).</text>
</comment>
<comment type="subunit">
    <text evidence="1 2">Forms a soluble 1:1 complex with AFM; this prevents oligomerization and is required for prolonged biological activity. The complex with AFM may represent the physiological form in body fluids (By similarity). Interacts with PORCN (By similarity). Interacts (via intrinsically disordered linker region) with RECK; interaction with RECK confers ligand selectivity for Wnt7 in brain endothelial cells and allows these cells to selectively respond to Wnt7 (By similarity). Interacts with FZD5 (By similarity).</text>
</comment>
<comment type="subcellular location">
    <subcellularLocation>
        <location evidence="2">Secreted</location>
        <location evidence="2">Extracellular space</location>
        <location evidence="2">Extracellular matrix</location>
    </subcellularLocation>
    <subcellularLocation>
        <location evidence="2">Secreted</location>
    </subcellularLocation>
</comment>
<comment type="domain">
    <text evidence="1">The intrinsically disordered linker region is required for recognition by RECK in brain endothelial cells.</text>
</comment>
<comment type="PTM">
    <text evidence="3 5">Palmitoleoylation is required for efficient binding to frizzled receptors. Depalmitoleoylation leads to Wnt signaling pathway inhibition.</text>
</comment>
<comment type="similarity">
    <text evidence="7">Belongs to the Wnt family.</text>
</comment>
<reference key="1">
    <citation type="submission" date="2006-01" db="EMBL/GenBank/DDBJ databases">
        <title>WNT7A and limb development.</title>
        <authorList>
            <person name="Stern R."/>
            <person name="Cox J."/>
            <person name="Nicholas A."/>
            <person name="Al-Gazali L."/>
            <person name="Woods G."/>
        </authorList>
    </citation>
    <scope>NUCLEOTIDE SEQUENCE [GENOMIC DNA]</scope>
</reference>